<evidence type="ECO:0000255" key="1">
    <source>
        <dbReference type="HAMAP-Rule" id="MF_03145"/>
    </source>
</evidence>
<sequence length="347" mass="39697">MVPESFLLELPKCEHHLHLEGTLEPDLLFPLAKRNNIQLPDHFPQTPEELAVRYTQFKDLQDFLDYYYIGTNVLLKEEDFFDLAWAYFTKVSKQGLVHAELFYDPQSHTTRGVSLETVTRGFERACKKAHEELGITSKLIMCLLRHLPPQDCLQTIEEAEQLIKSGVIHGLGLDSAEKPFPPSLFVECYERAAKINPELRLTAHAGEEGTHQFVSDALDLLNVTRIDHGVNSKQSEELMARLAEQQTLLTVCPLSNVKLQVVQSVKEIPLQLFLDKNIAFSLNSDDPAYFGGYILDNYYQVNKDFPDWDFKVWERIAKNGINGSWCEQKRKEELLAKVDAVVAKYTN</sequence>
<keyword id="KW-0963">Cytoplasm</keyword>
<keyword id="KW-0378">Hydrolase</keyword>
<keyword id="KW-0479">Metal-binding</keyword>
<keyword id="KW-0546">Nucleotide metabolism</keyword>
<keyword id="KW-0539">Nucleus</keyword>
<keyword id="KW-1185">Reference proteome</keyword>
<keyword id="KW-0862">Zinc</keyword>
<gene>
    <name evidence="1" type="primary">AAH1</name>
    <name type="ordered locus">CAGL0J05984g</name>
</gene>
<reference key="1">
    <citation type="journal article" date="2004" name="Nature">
        <title>Genome evolution in yeasts.</title>
        <authorList>
            <person name="Dujon B."/>
            <person name="Sherman D."/>
            <person name="Fischer G."/>
            <person name="Durrens P."/>
            <person name="Casaregola S."/>
            <person name="Lafontaine I."/>
            <person name="de Montigny J."/>
            <person name="Marck C."/>
            <person name="Neuveglise C."/>
            <person name="Talla E."/>
            <person name="Goffard N."/>
            <person name="Frangeul L."/>
            <person name="Aigle M."/>
            <person name="Anthouard V."/>
            <person name="Babour A."/>
            <person name="Barbe V."/>
            <person name="Barnay S."/>
            <person name="Blanchin S."/>
            <person name="Beckerich J.-M."/>
            <person name="Beyne E."/>
            <person name="Bleykasten C."/>
            <person name="Boisrame A."/>
            <person name="Boyer J."/>
            <person name="Cattolico L."/>
            <person name="Confanioleri F."/>
            <person name="de Daruvar A."/>
            <person name="Despons L."/>
            <person name="Fabre E."/>
            <person name="Fairhead C."/>
            <person name="Ferry-Dumazet H."/>
            <person name="Groppi A."/>
            <person name="Hantraye F."/>
            <person name="Hennequin C."/>
            <person name="Jauniaux N."/>
            <person name="Joyet P."/>
            <person name="Kachouri R."/>
            <person name="Kerrest A."/>
            <person name="Koszul R."/>
            <person name="Lemaire M."/>
            <person name="Lesur I."/>
            <person name="Ma L."/>
            <person name="Muller H."/>
            <person name="Nicaud J.-M."/>
            <person name="Nikolski M."/>
            <person name="Oztas S."/>
            <person name="Ozier-Kalogeropoulos O."/>
            <person name="Pellenz S."/>
            <person name="Potier S."/>
            <person name="Richard G.-F."/>
            <person name="Straub M.-L."/>
            <person name="Suleau A."/>
            <person name="Swennen D."/>
            <person name="Tekaia F."/>
            <person name="Wesolowski-Louvel M."/>
            <person name="Westhof E."/>
            <person name="Wirth B."/>
            <person name="Zeniou-Meyer M."/>
            <person name="Zivanovic Y."/>
            <person name="Bolotin-Fukuhara M."/>
            <person name="Thierry A."/>
            <person name="Bouchier C."/>
            <person name="Caudron B."/>
            <person name="Scarpelli C."/>
            <person name="Gaillardin C."/>
            <person name="Weissenbach J."/>
            <person name="Wincker P."/>
            <person name="Souciet J.-L."/>
        </authorList>
    </citation>
    <scope>NUCLEOTIDE SEQUENCE [LARGE SCALE GENOMIC DNA]</scope>
    <source>
        <strain>ATCC 2001 / BCRC 20586 / JCM 3761 / NBRC 0622 / NRRL Y-65 / CBS 138</strain>
    </source>
</reference>
<accession>Q6FP78</accession>
<comment type="function">
    <text evidence="1">Catalyzes the hydrolytic deamination of adenine to hypoxanthine. Plays an important role in the purine salvage pathway and in nitrogen catabolism.</text>
</comment>
<comment type="catalytic activity">
    <reaction evidence="1">
        <text>adenine + H2O + H(+) = hypoxanthine + NH4(+)</text>
        <dbReference type="Rhea" id="RHEA:23688"/>
        <dbReference type="ChEBI" id="CHEBI:15377"/>
        <dbReference type="ChEBI" id="CHEBI:15378"/>
        <dbReference type="ChEBI" id="CHEBI:16708"/>
        <dbReference type="ChEBI" id="CHEBI:17368"/>
        <dbReference type="ChEBI" id="CHEBI:28938"/>
        <dbReference type="EC" id="3.5.4.2"/>
    </reaction>
</comment>
<comment type="cofactor">
    <cofactor evidence="1">
        <name>Zn(2+)</name>
        <dbReference type="ChEBI" id="CHEBI:29105"/>
    </cofactor>
    <text evidence="1">Binds 1 zinc ion per subunit.</text>
</comment>
<comment type="subcellular location">
    <subcellularLocation>
        <location evidence="1">Cytoplasm</location>
    </subcellularLocation>
    <subcellularLocation>
        <location evidence="1">Nucleus</location>
    </subcellularLocation>
</comment>
<comment type="similarity">
    <text evidence="1">Belongs to the metallo-dependent hydrolases superfamily. Adenosine and AMP deaminases family. Adenine deaminase type 2 subfamily.</text>
</comment>
<feature type="chain" id="PRO_0000256233" description="Adenine deaminase">
    <location>
        <begin position="1"/>
        <end position="347"/>
    </location>
</feature>
<feature type="active site" description="Proton donor" evidence="1">
    <location>
        <position position="207"/>
    </location>
</feature>
<feature type="binding site" evidence="1">
    <location>
        <position position="16"/>
    </location>
    <ligand>
        <name>Zn(2+)</name>
        <dbReference type="ChEBI" id="CHEBI:29105"/>
        <note>catalytic</note>
    </ligand>
</feature>
<feature type="binding site" evidence="1">
    <location>
        <position position="18"/>
    </location>
    <ligand>
        <name>Zn(2+)</name>
        <dbReference type="ChEBI" id="CHEBI:29105"/>
        <note>catalytic</note>
    </ligand>
</feature>
<feature type="binding site" evidence="1">
    <location>
        <position position="204"/>
    </location>
    <ligand>
        <name>Zn(2+)</name>
        <dbReference type="ChEBI" id="CHEBI:29105"/>
        <note>catalytic</note>
    </ligand>
</feature>
<feature type="binding site" evidence="1">
    <location>
        <position position="285"/>
    </location>
    <ligand>
        <name>Zn(2+)</name>
        <dbReference type="ChEBI" id="CHEBI:29105"/>
        <note>catalytic</note>
    </ligand>
</feature>
<feature type="binding site" evidence="1">
    <location>
        <position position="286"/>
    </location>
    <ligand>
        <name>substrate</name>
    </ligand>
</feature>
<feature type="site" description="Important for catalytic activity" evidence="1">
    <location>
        <position position="228"/>
    </location>
</feature>
<protein>
    <recommendedName>
        <fullName evidence="1">Adenine deaminase</fullName>
        <shortName evidence="1">ADE</shortName>
        <ecNumber evidence="1">3.5.4.2</ecNumber>
    </recommendedName>
    <alternativeName>
        <fullName evidence="1">Adenine aminohydrolase</fullName>
        <shortName evidence="1">AAH</shortName>
    </alternativeName>
</protein>
<organism>
    <name type="scientific">Candida glabrata (strain ATCC 2001 / BCRC 20586 / JCM 3761 / NBRC 0622 / NRRL Y-65 / CBS 138)</name>
    <name type="common">Yeast</name>
    <name type="synonym">Nakaseomyces glabratus</name>
    <dbReference type="NCBI Taxonomy" id="284593"/>
    <lineage>
        <taxon>Eukaryota</taxon>
        <taxon>Fungi</taxon>
        <taxon>Dikarya</taxon>
        <taxon>Ascomycota</taxon>
        <taxon>Saccharomycotina</taxon>
        <taxon>Saccharomycetes</taxon>
        <taxon>Saccharomycetales</taxon>
        <taxon>Saccharomycetaceae</taxon>
        <taxon>Nakaseomyces</taxon>
    </lineage>
</organism>
<proteinExistence type="inferred from homology"/>
<dbReference type="EC" id="3.5.4.2" evidence="1"/>
<dbReference type="EMBL" id="CR380956">
    <property type="protein sequence ID" value="CAG60917.1"/>
    <property type="molecule type" value="Genomic_DNA"/>
</dbReference>
<dbReference type="RefSeq" id="XP_447966.1">
    <property type="nucleotide sequence ID" value="XM_447966.1"/>
</dbReference>
<dbReference type="SMR" id="Q6FP78"/>
<dbReference type="FunCoup" id="Q6FP78">
    <property type="interactions" value="668"/>
</dbReference>
<dbReference type="STRING" id="284593.Q6FP78"/>
<dbReference type="EnsemblFungi" id="CAGL0J05984g-T">
    <property type="protein sequence ID" value="CAGL0J05984g-T-p1"/>
    <property type="gene ID" value="CAGL0J05984g"/>
</dbReference>
<dbReference type="KEGG" id="cgr:2889775"/>
<dbReference type="CGD" id="CAL0133440">
    <property type="gene designation" value="CAGL0J05984g"/>
</dbReference>
<dbReference type="VEuPathDB" id="FungiDB:B1J91_J05984g"/>
<dbReference type="VEuPathDB" id="FungiDB:CAGL0J05984g"/>
<dbReference type="eggNOG" id="KOG1097">
    <property type="taxonomic scope" value="Eukaryota"/>
</dbReference>
<dbReference type="HOGENOM" id="CLU_039228_7_0_1"/>
<dbReference type="InParanoid" id="Q6FP78"/>
<dbReference type="OMA" id="NHFTIHA"/>
<dbReference type="Proteomes" id="UP000002428">
    <property type="component" value="Chromosome J"/>
</dbReference>
<dbReference type="GO" id="GO:0005829">
    <property type="term" value="C:cytosol"/>
    <property type="evidence" value="ECO:0007669"/>
    <property type="project" value="TreeGrafter"/>
</dbReference>
<dbReference type="GO" id="GO:0005634">
    <property type="term" value="C:nucleus"/>
    <property type="evidence" value="ECO:0007669"/>
    <property type="project" value="UniProtKB-SubCell"/>
</dbReference>
<dbReference type="GO" id="GO:0000034">
    <property type="term" value="F:adenine deaminase activity"/>
    <property type="evidence" value="ECO:0007669"/>
    <property type="project" value="UniProtKB-UniRule"/>
</dbReference>
<dbReference type="GO" id="GO:0008270">
    <property type="term" value="F:zinc ion binding"/>
    <property type="evidence" value="ECO:0007669"/>
    <property type="project" value="UniProtKB-UniRule"/>
</dbReference>
<dbReference type="GO" id="GO:0006146">
    <property type="term" value="P:adenine catabolic process"/>
    <property type="evidence" value="ECO:0007669"/>
    <property type="project" value="UniProtKB-UniRule"/>
</dbReference>
<dbReference type="GO" id="GO:0043103">
    <property type="term" value="P:hypoxanthine salvage"/>
    <property type="evidence" value="ECO:0007669"/>
    <property type="project" value="UniProtKB-UniRule"/>
</dbReference>
<dbReference type="GO" id="GO:0032264">
    <property type="term" value="P:IMP salvage"/>
    <property type="evidence" value="ECO:0007669"/>
    <property type="project" value="EnsemblFungi"/>
</dbReference>
<dbReference type="CDD" id="cd01320">
    <property type="entry name" value="ADA"/>
    <property type="match status" value="1"/>
</dbReference>
<dbReference type="FunFam" id="3.20.20.140:FF:000039">
    <property type="entry name" value="Adenine deaminase"/>
    <property type="match status" value="1"/>
</dbReference>
<dbReference type="Gene3D" id="3.20.20.140">
    <property type="entry name" value="Metal-dependent hydrolases"/>
    <property type="match status" value="1"/>
</dbReference>
<dbReference type="HAMAP" id="MF_01962">
    <property type="entry name" value="Adenine_deaminase"/>
    <property type="match status" value="1"/>
</dbReference>
<dbReference type="InterPro" id="IPR006650">
    <property type="entry name" value="A/AMP_deam_AS"/>
</dbReference>
<dbReference type="InterPro" id="IPR001365">
    <property type="entry name" value="A_deaminase_dom"/>
</dbReference>
<dbReference type="InterPro" id="IPR028892">
    <property type="entry name" value="ADE"/>
</dbReference>
<dbReference type="InterPro" id="IPR006330">
    <property type="entry name" value="Ado/ade_deaminase"/>
</dbReference>
<dbReference type="InterPro" id="IPR032466">
    <property type="entry name" value="Metal_Hydrolase"/>
</dbReference>
<dbReference type="NCBIfam" id="TIGR01430">
    <property type="entry name" value="aden_deam"/>
    <property type="match status" value="1"/>
</dbReference>
<dbReference type="PANTHER" id="PTHR43114">
    <property type="entry name" value="ADENINE DEAMINASE"/>
    <property type="match status" value="1"/>
</dbReference>
<dbReference type="PANTHER" id="PTHR43114:SF6">
    <property type="entry name" value="ADENINE DEAMINASE"/>
    <property type="match status" value="1"/>
</dbReference>
<dbReference type="Pfam" id="PF00962">
    <property type="entry name" value="A_deaminase"/>
    <property type="match status" value="1"/>
</dbReference>
<dbReference type="SUPFAM" id="SSF51556">
    <property type="entry name" value="Metallo-dependent hydrolases"/>
    <property type="match status" value="1"/>
</dbReference>
<dbReference type="PROSITE" id="PS00485">
    <property type="entry name" value="A_DEAMINASE"/>
    <property type="match status" value="1"/>
</dbReference>
<name>ADE_CANGA</name>